<name>YP55_ECOLX</name>
<protein>
    <recommendedName>
        <fullName>Uncharacterized 5.5 kDa protein in replication origin region</fullName>
    </recommendedName>
    <alternativeName>
        <fullName>ORF1</fullName>
    </alternativeName>
</protein>
<accession>P14505</accession>
<sequence length="52" mass="5511">MKAVGRGATPLGGWEAALAAGWGSRRGGTPLRRPIILRGTLGRFAAFFDTRL</sequence>
<geneLocation type="plasmid">
    <name>IncP-beta R751</name>
</geneLocation>
<organism>
    <name type="scientific">Escherichia coli</name>
    <dbReference type="NCBI Taxonomy" id="562"/>
    <lineage>
        <taxon>Bacteria</taxon>
        <taxon>Pseudomonadati</taxon>
        <taxon>Pseudomonadota</taxon>
        <taxon>Gammaproteobacteria</taxon>
        <taxon>Enterobacterales</taxon>
        <taxon>Enterobacteriaceae</taxon>
        <taxon>Escherichia</taxon>
    </lineage>
</organism>
<reference key="1">
    <citation type="journal article" date="1985" name="Nucleic Acids Res.">
        <title>Comparison of the nucleotide sequences of the vegetative replication origins of broad host range IncP plasmids R751 and RK2 reveals conserved features of probable functional importance.</title>
        <authorList>
            <person name="Smith C.A."/>
            <person name="Thomas C.M."/>
        </authorList>
    </citation>
    <scope>NUCLEOTIDE SEQUENCE [GENOMIC DNA]</scope>
</reference>
<dbReference type="EMBL" id="X01751">
    <property type="protein sequence ID" value="CAA25888.1"/>
    <property type="molecule type" value="Genomic_DNA"/>
</dbReference>
<dbReference type="EMBL" id="U67194">
    <property type="protein sequence ID" value="AAC64431.1"/>
    <property type="molecule type" value="Genomic_DNA"/>
</dbReference>
<proteinExistence type="predicted"/>
<feature type="chain" id="PRO_0000068529" description="Uncharacterized 5.5 kDa protein in replication origin region">
    <location>
        <begin position="1"/>
        <end position="52"/>
    </location>
</feature>
<keyword id="KW-0614">Plasmid</keyword>